<protein>
    <recommendedName>
        <fullName>Putative fimbrium tip subunit Fim1F</fullName>
    </recommendedName>
</protein>
<organism evidence="6">
    <name type="scientific">Parabacteroides distasonis (strain ATCC 8503 / DSM 20701 / CIP 104284 / JCM 5825 / NCTC 11152)</name>
    <dbReference type="NCBI Taxonomy" id="435591"/>
    <lineage>
        <taxon>Bacteria</taxon>
        <taxon>Pseudomonadati</taxon>
        <taxon>Bacteroidota</taxon>
        <taxon>Bacteroidia</taxon>
        <taxon>Bacteroidales</taxon>
        <taxon>Tannerellaceae</taxon>
        <taxon>Parabacteroides</taxon>
    </lineage>
</organism>
<keyword id="KW-0002">3D-structure</keyword>
<keyword id="KW-0281">Fimbrium</keyword>
<keyword id="KW-1185">Reference proteome</keyword>
<keyword id="KW-0732">Signal</keyword>
<feature type="signal peptide" evidence="1">
    <location>
        <begin position="1"/>
        <end position="24"/>
    </location>
</feature>
<feature type="propeptide" id="PRO_0000436738" evidence="3">
    <location>
        <begin position="25"/>
        <end position="50"/>
    </location>
</feature>
<feature type="chain" id="PRO_5002698948" description="Putative fimbrium tip subunit Fim1F">
    <location>
        <begin position="51"/>
        <end position="318"/>
    </location>
</feature>
<feature type="strand" evidence="8">
    <location>
        <begin position="34"/>
        <end position="45"/>
    </location>
</feature>
<feature type="helix" evidence="8">
    <location>
        <begin position="61"/>
        <end position="64"/>
    </location>
</feature>
<feature type="strand" evidence="8">
    <location>
        <begin position="67"/>
        <end position="74"/>
    </location>
</feature>
<feature type="strand" evidence="8">
    <location>
        <begin position="78"/>
        <end position="87"/>
    </location>
</feature>
<feature type="helix" evidence="8">
    <location>
        <begin position="88"/>
        <end position="91"/>
    </location>
</feature>
<feature type="strand" evidence="8">
    <location>
        <begin position="95"/>
        <end position="97"/>
    </location>
</feature>
<feature type="strand" evidence="8">
    <location>
        <begin position="100"/>
        <end position="112"/>
    </location>
</feature>
<feature type="strand" evidence="8">
    <location>
        <begin position="118"/>
        <end position="127"/>
    </location>
</feature>
<feature type="strand" evidence="8">
    <location>
        <begin position="131"/>
        <end position="133"/>
    </location>
</feature>
<feature type="turn" evidence="8">
    <location>
        <begin position="135"/>
        <end position="138"/>
    </location>
</feature>
<feature type="strand" evidence="8">
    <location>
        <begin position="141"/>
        <end position="143"/>
    </location>
</feature>
<feature type="strand" evidence="8">
    <location>
        <begin position="145"/>
        <end position="148"/>
    </location>
</feature>
<feature type="turn" evidence="8">
    <location>
        <begin position="149"/>
        <end position="151"/>
    </location>
</feature>
<feature type="helix" evidence="8">
    <location>
        <begin position="161"/>
        <end position="163"/>
    </location>
</feature>
<feature type="strand" evidence="8">
    <location>
        <begin position="166"/>
        <end position="174"/>
    </location>
</feature>
<feature type="strand" evidence="8">
    <location>
        <begin position="183"/>
        <end position="186"/>
    </location>
</feature>
<feature type="strand" evidence="8">
    <location>
        <begin position="188"/>
        <end position="201"/>
    </location>
</feature>
<feature type="turn" evidence="8">
    <location>
        <begin position="202"/>
        <end position="204"/>
    </location>
</feature>
<feature type="strand" evidence="8">
    <location>
        <begin position="213"/>
        <end position="217"/>
    </location>
</feature>
<feature type="strand" evidence="8">
    <location>
        <begin position="223"/>
        <end position="226"/>
    </location>
</feature>
<feature type="strand" evidence="8">
    <location>
        <begin position="249"/>
        <end position="254"/>
    </location>
</feature>
<feature type="strand" evidence="8">
    <location>
        <begin position="262"/>
        <end position="268"/>
    </location>
</feature>
<feature type="strand" evidence="8">
    <location>
        <begin position="270"/>
        <end position="279"/>
    </location>
</feature>
<feature type="helix" evidence="8">
    <location>
        <begin position="280"/>
        <end position="282"/>
    </location>
</feature>
<feature type="strand" evidence="8">
    <location>
        <begin position="288"/>
        <end position="295"/>
    </location>
</feature>
<feature type="strand" evidence="8">
    <location>
        <begin position="300"/>
        <end position="306"/>
    </location>
</feature>
<feature type="turn" evidence="8">
    <location>
        <begin position="307"/>
        <end position="310"/>
    </location>
</feature>
<feature type="strand" evidence="8">
    <location>
        <begin position="311"/>
        <end position="314"/>
    </location>
</feature>
<accession>A6LHQ9</accession>
<sequence length="318" mass="35129">MRFNVVLFMLIVALLGGLSTCSSEVPIGFDTDELSFDMSLVLLTGDMQTKASDPNYTYATTEELTIQNCHVAVFDKDGKRIYFKNFYSKDLGEMKTIGNLSGYELQLEGVRTFGKEDKKVSVLVVANANNANNSPFDNLTTYDGVDNSYTAKTIAKGPVTASLLVKIGKSETTLKYNQDNAPVTVSLIQLSAKIEYTGVYKKENGELLEGFSLTKVAGLNASSKITIFNTSAVENGAFSDLAYPTTKPVTFYTYEISDAFKEVILSVQSGVEPKEYPFPANKFIKGNYYRIKGLKSSTEIEWVLENVEDKEVTLDPFE</sequence>
<evidence type="ECO:0000255" key="1"/>
<evidence type="ECO:0000305" key="2"/>
<evidence type="ECO:0000305" key="3">
    <source>
    </source>
</evidence>
<evidence type="ECO:0000305" key="4">
    <source>
    </source>
</evidence>
<evidence type="ECO:0000312" key="5">
    <source>
        <dbReference type="EMBL" id="ABR45223.1"/>
    </source>
</evidence>
<evidence type="ECO:0000312" key="6">
    <source>
        <dbReference type="Proteomes" id="UP000000566"/>
    </source>
</evidence>
<evidence type="ECO:0007744" key="7">
    <source>
        <dbReference type="PDB" id="3R4R"/>
    </source>
</evidence>
<evidence type="ECO:0007829" key="8">
    <source>
        <dbReference type="PDB" id="3R4R"/>
    </source>
</evidence>
<gene>
    <name evidence="5" type="ordered locus">BDI_3522</name>
</gene>
<comment type="function">
    <text evidence="4">Putative component of the fimbrium tip. Fimbriae are filamentous appendages on the cell surface that mediate cell adhesion and biofilm formation.</text>
</comment>
<comment type="subunit">
    <text evidence="4">May be part of the fimbrial tip.</text>
</comment>
<comment type="subcellular location">
    <subcellularLocation>
        <location evidence="4">Fimbrium</location>
    </subcellularLocation>
</comment>
<comment type="similarity">
    <text evidence="2">Belongs to the bacteroidetes fimbrillin superfamily. FimA/Mfa1 family.</text>
</comment>
<comment type="caution">
    <text evidence="2">A propeptide cleavage site can be predicted based on structural similarity with other family members. Still, this protein lacks the lipidation signal found in other family members, suggesting it may not be exported to the cell surface, and may not be part of the fimbriae.</text>
</comment>
<proteinExistence type="evidence at protein level"/>
<dbReference type="EMBL" id="CP000140">
    <property type="protein sequence ID" value="ABR45223.1"/>
    <property type="molecule type" value="Genomic_DNA"/>
</dbReference>
<dbReference type="RefSeq" id="WP_009275397.1">
    <property type="nucleotide sequence ID" value="NC_009615.1"/>
</dbReference>
<dbReference type="PDB" id="3R4R">
    <property type="method" value="X-ray"/>
    <property type="resolution" value="2.38 A"/>
    <property type="chains" value="A/B=24-318"/>
</dbReference>
<dbReference type="PDBsum" id="3R4R"/>
<dbReference type="SMR" id="A6LHQ9"/>
<dbReference type="STRING" id="435591.BDI_3522"/>
<dbReference type="PaxDb" id="435591-BDI_3522"/>
<dbReference type="DNASU" id="5308671"/>
<dbReference type="KEGG" id="pdi:BDI_3522"/>
<dbReference type="HOGENOM" id="CLU_899122_0_0_10"/>
<dbReference type="BioCyc" id="PDIS435591:G1G5A-3614-MONOMER"/>
<dbReference type="EvolutionaryTrace" id="A6LHQ9"/>
<dbReference type="Proteomes" id="UP000000566">
    <property type="component" value="Chromosome"/>
</dbReference>
<dbReference type="GO" id="GO:0009289">
    <property type="term" value="C:pilus"/>
    <property type="evidence" value="ECO:0007669"/>
    <property type="project" value="UniProtKB-SubCell"/>
</dbReference>
<dbReference type="Gene3D" id="2.60.40.2580">
    <property type="match status" value="1"/>
</dbReference>
<dbReference type="Gene3D" id="2.60.40.2590">
    <property type="match status" value="1"/>
</dbReference>
<dbReference type="InterPro" id="IPR055058">
    <property type="entry name" value="Fim1F_C"/>
</dbReference>
<dbReference type="InterPro" id="IPR029141">
    <property type="entry name" value="FimA_N"/>
</dbReference>
<dbReference type="Pfam" id="PF22449">
    <property type="entry name" value="Fim1F_C"/>
    <property type="match status" value="1"/>
</dbReference>
<dbReference type="Pfam" id="PF06321">
    <property type="entry name" value="P_gingi_FimA"/>
    <property type="match status" value="1"/>
</dbReference>
<reference evidence="5 6" key="1">
    <citation type="journal article" date="2007" name="PLoS Biol.">
        <title>Evolution of symbiotic bacteria in the distal human intestine.</title>
        <authorList>
            <person name="Xu J."/>
            <person name="Mahowald M.A."/>
            <person name="Ley R.E."/>
            <person name="Lozupone C.A."/>
            <person name="Hamady M."/>
            <person name="Martens E.C."/>
            <person name="Henrissat B."/>
            <person name="Coutinho P.M."/>
            <person name="Minx P."/>
            <person name="Latreille P."/>
            <person name="Cordum H."/>
            <person name="Van Brunt A."/>
            <person name="Kim K."/>
            <person name="Fulton R.S."/>
            <person name="Fulton L.A."/>
            <person name="Clifton S.W."/>
            <person name="Wilson R.K."/>
            <person name="Knight R.D."/>
            <person name="Gordon J.I."/>
        </authorList>
    </citation>
    <scope>NUCLEOTIDE SEQUENCE [LARGE SCALE GENOMIC DNA]</scope>
    <source>
        <strain evidence="6">ATCC 8503 / DSM 20701 / CIP 104284 / JCM 5825 / NCTC 11152</strain>
    </source>
</reference>
<reference key="2">
    <citation type="journal article" date="2016" name="Sci. Rep.">
        <title>Structure of the fimbrial protein Mfa4 from Porphyromonas gingivalis in its precursor form: implications for a donor-strand complementation mechanism.</title>
        <authorList>
            <person name="Kloppsteck P."/>
            <person name="Hall M."/>
            <person name="Hasegawa Y."/>
            <person name="Persson K."/>
        </authorList>
    </citation>
    <scope>PREDICTED PROPEPTIDE CLEAVAGE</scope>
</reference>
<reference evidence="7" key="3">
    <citation type="journal article" date="2016" name="Cell">
        <title>A distinct type of pilus from the human microbiome.</title>
        <authorList>
            <person name="Xu Q."/>
            <person name="Shoji M."/>
            <person name="Shibata S."/>
            <person name="Naito M."/>
            <person name="Sato K."/>
            <person name="Elsliger M.A."/>
            <person name="Grant J.C."/>
            <person name="Axelrod H.L."/>
            <person name="Chiu H.J."/>
            <person name="Farr C.L."/>
            <person name="Jaroszewski L."/>
            <person name="Knuth M.W."/>
            <person name="Deacon A.M."/>
            <person name="Godzik A."/>
            <person name="Lesley S.A."/>
            <person name="Curtis M.A."/>
            <person name="Nakayama K."/>
            <person name="Wilson I.A."/>
        </authorList>
    </citation>
    <scope>X-RAY CRYSTALLOGRAPHY (2.38 ANGSTROMS) OF 24-318</scope>
    <scope>FUNCTION</scope>
    <scope>SUBUNIT</scope>
    <scope>SUBCELLULAR LOCATION</scope>
    <source>
        <strain>ATCC 8503 / DSM 20701 / CIP 104284 / JCM 5825 / NCTC 11152</strain>
    </source>
</reference>
<name>FIM1F_PARD8</name>